<organism>
    <name type="scientific">Staphylococcus aureus (strain MW2)</name>
    <dbReference type="NCBI Taxonomy" id="196620"/>
    <lineage>
        <taxon>Bacteria</taxon>
        <taxon>Bacillati</taxon>
        <taxon>Bacillota</taxon>
        <taxon>Bacilli</taxon>
        <taxon>Bacillales</taxon>
        <taxon>Staphylococcaceae</taxon>
        <taxon>Staphylococcus</taxon>
    </lineage>
</organism>
<proteinExistence type="inferred from homology"/>
<protein>
    <recommendedName>
        <fullName evidence="1">Large ribosomal subunit protein uL10</fullName>
    </recommendedName>
    <alternativeName>
        <fullName evidence="2">50S ribosomal protein L10</fullName>
    </alternativeName>
</protein>
<feature type="chain" id="PRO_0000154710" description="Large ribosomal subunit protein uL10">
    <location>
        <begin position="1"/>
        <end position="166"/>
    </location>
</feature>
<accession>P66049</accession>
<accession>Q99W67</accession>
<evidence type="ECO:0000255" key="1">
    <source>
        <dbReference type="HAMAP-Rule" id="MF_00362"/>
    </source>
</evidence>
<evidence type="ECO:0000305" key="2"/>
<name>RL10_STAAW</name>
<keyword id="KW-0687">Ribonucleoprotein</keyword>
<keyword id="KW-0689">Ribosomal protein</keyword>
<keyword id="KW-0694">RNA-binding</keyword>
<keyword id="KW-0699">rRNA-binding</keyword>
<gene>
    <name evidence="1" type="primary">rplJ</name>
    <name type="ordered locus">MW0494</name>
</gene>
<sequence>MSAIIEAKKQLVDEIAEVLSNSVSTVIVDYRGLTVAEVTDLRSQLREAGVEYKVYKNTMVRRAAEKAGIEGLDEFLTGPTAIATSSEDAVAAAKVISGFAKDHEALEIKSGVMEGNVITAEEVKTVGSLPSHDGLVSMLLSVLQAPVRNFAYAVKAIGEQKEENAE</sequence>
<dbReference type="EMBL" id="BA000033">
    <property type="protein sequence ID" value="BAB94359.1"/>
    <property type="molecule type" value="Genomic_DNA"/>
</dbReference>
<dbReference type="RefSeq" id="WP_001273085.1">
    <property type="nucleotide sequence ID" value="NC_003923.1"/>
</dbReference>
<dbReference type="SMR" id="P66049"/>
<dbReference type="KEGG" id="sam:MW0494"/>
<dbReference type="HOGENOM" id="CLU_092227_2_0_9"/>
<dbReference type="GO" id="GO:0015934">
    <property type="term" value="C:large ribosomal subunit"/>
    <property type="evidence" value="ECO:0007669"/>
    <property type="project" value="InterPro"/>
</dbReference>
<dbReference type="GO" id="GO:0070180">
    <property type="term" value="F:large ribosomal subunit rRNA binding"/>
    <property type="evidence" value="ECO:0007669"/>
    <property type="project" value="UniProtKB-UniRule"/>
</dbReference>
<dbReference type="GO" id="GO:0003735">
    <property type="term" value="F:structural constituent of ribosome"/>
    <property type="evidence" value="ECO:0007669"/>
    <property type="project" value="InterPro"/>
</dbReference>
<dbReference type="GO" id="GO:0006412">
    <property type="term" value="P:translation"/>
    <property type="evidence" value="ECO:0007669"/>
    <property type="project" value="UniProtKB-UniRule"/>
</dbReference>
<dbReference type="CDD" id="cd05797">
    <property type="entry name" value="Ribosomal_L10"/>
    <property type="match status" value="1"/>
</dbReference>
<dbReference type="FunFam" id="3.30.70.1730:FF:000001">
    <property type="entry name" value="50S ribosomal protein L10"/>
    <property type="match status" value="1"/>
</dbReference>
<dbReference type="Gene3D" id="3.30.70.1730">
    <property type="match status" value="1"/>
</dbReference>
<dbReference type="Gene3D" id="6.10.250.290">
    <property type="match status" value="1"/>
</dbReference>
<dbReference type="HAMAP" id="MF_00362">
    <property type="entry name" value="Ribosomal_uL10"/>
    <property type="match status" value="1"/>
</dbReference>
<dbReference type="InterPro" id="IPR001790">
    <property type="entry name" value="Ribosomal_uL10"/>
</dbReference>
<dbReference type="InterPro" id="IPR043141">
    <property type="entry name" value="Ribosomal_uL10-like_sf"/>
</dbReference>
<dbReference type="InterPro" id="IPR022973">
    <property type="entry name" value="Ribosomal_uL10_bac"/>
</dbReference>
<dbReference type="InterPro" id="IPR047865">
    <property type="entry name" value="Ribosomal_uL10_bac_type"/>
</dbReference>
<dbReference type="InterPro" id="IPR002363">
    <property type="entry name" value="Ribosomal_uL10_CS_bac"/>
</dbReference>
<dbReference type="NCBIfam" id="NF000955">
    <property type="entry name" value="PRK00099.1-1"/>
    <property type="match status" value="1"/>
</dbReference>
<dbReference type="PANTHER" id="PTHR11560">
    <property type="entry name" value="39S RIBOSOMAL PROTEIN L10, MITOCHONDRIAL"/>
    <property type="match status" value="1"/>
</dbReference>
<dbReference type="Pfam" id="PF00466">
    <property type="entry name" value="Ribosomal_L10"/>
    <property type="match status" value="1"/>
</dbReference>
<dbReference type="SUPFAM" id="SSF160369">
    <property type="entry name" value="Ribosomal protein L10-like"/>
    <property type="match status" value="1"/>
</dbReference>
<dbReference type="PROSITE" id="PS01109">
    <property type="entry name" value="RIBOSOMAL_L10"/>
    <property type="match status" value="1"/>
</dbReference>
<reference key="1">
    <citation type="journal article" date="2002" name="Lancet">
        <title>Genome and virulence determinants of high virulence community-acquired MRSA.</title>
        <authorList>
            <person name="Baba T."/>
            <person name="Takeuchi F."/>
            <person name="Kuroda M."/>
            <person name="Yuzawa H."/>
            <person name="Aoki K."/>
            <person name="Oguchi A."/>
            <person name="Nagai Y."/>
            <person name="Iwama N."/>
            <person name="Asano K."/>
            <person name="Naimi T."/>
            <person name="Kuroda H."/>
            <person name="Cui L."/>
            <person name="Yamamoto K."/>
            <person name="Hiramatsu K."/>
        </authorList>
    </citation>
    <scope>NUCLEOTIDE SEQUENCE [LARGE SCALE GENOMIC DNA]</scope>
    <source>
        <strain>MW2</strain>
    </source>
</reference>
<comment type="function">
    <text evidence="1">Forms part of the ribosomal stalk, playing a central role in the interaction of the ribosome with GTP-bound translation factors.</text>
</comment>
<comment type="subunit">
    <text evidence="1">Part of the ribosomal stalk of the 50S ribosomal subunit. The N-terminus interacts with L11 and the large rRNA to form the base of the stalk. The C-terminus forms an elongated spine to which L12 dimers bind in a sequential fashion forming a multimeric L10(L12)X complex.</text>
</comment>
<comment type="similarity">
    <text evidence="1">Belongs to the universal ribosomal protein uL10 family.</text>
</comment>